<proteinExistence type="inferred from homology"/>
<organism>
    <name type="scientific">Roseobacter denitrificans (strain ATCC 33942 / OCh 114)</name>
    <name type="common">Erythrobacter sp. (strain OCh 114)</name>
    <name type="synonym">Roseobacter denitrificans</name>
    <dbReference type="NCBI Taxonomy" id="375451"/>
    <lineage>
        <taxon>Bacteria</taxon>
        <taxon>Pseudomonadati</taxon>
        <taxon>Pseudomonadota</taxon>
        <taxon>Alphaproteobacteria</taxon>
        <taxon>Rhodobacterales</taxon>
        <taxon>Roseobacteraceae</taxon>
        <taxon>Roseobacter</taxon>
    </lineage>
</organism>
<keyword id="KW-0456">Lyase</keyword>
<keyword id="KW-1185">Reference proteome</keyword>
<accession>Q16BN1</accession>
<dbReference type="EC" id="4.2.1.96" evidence="1"/>
<dbReference type="EMBL" id="CP000362">
    <property type="protein sequence ID" value="ABG30612.1"/>
    <property type="molecule type" value="Genomic_DNA"/>
</dbReference>
<dbReference type="RefSeq" id="WP_011567234.1">
    <property type="nucleotide sequence ID" value="NC_008209.1"/>
</dbReference>
<dbReference type="SMR" id="Q16BN1"/>
<dbReference type="STRING" id="375451.RD1_0944"/>
<dbReference type="KEGG" id="rde:RD1_0944"/>
<dbReference type="eggNOG" id="COG2154">
    <property type="taxonomic scope" value="Bacteria"/>
</dbReference>
<dbReference type="HOGENOM" id="CLU_081974_3_2_5"/>
<dbReference type="OrthoDB" id="9794987at2"/>
<dbReference type="Proteomes" id="UP000007029">
    <property type="component" value="Chromosome"/>
</dbReference>
<dbReference type="GO" id="GO:0008124">
    <property type="term" value="F:4-alpha-hydroxytetrahydrobiopterin dehydratase activity"/>
    <property type="evidence" value="ECO:0007669"/>
    <property type="project" value="UniProtKB-UniRule"/>
</dbReference>
<dbReference type="GO" id="GO:0006729">
    <property type="term" value="P:tetrahydrobiopterin biosynthetic process"/>
    <property type="evidence" value="ECO:0007669"/>
    <property type="project" value="InterPro"/>
</dbReference>
<dbReference type="CDD" id="cd00914">
    <property type="entry name" value="PCD_DCoH_subfamily_b"/>
    <property type="match status" value="1"/>
</dbReference>
<dbReference type="Gene3D" id="3.30.1360.20">
    <property type="entry name" value="Transcriptional coactivator/pterin dehydratase"/>
    <property type="match status" value="1"/>
</dbReference>
<dbReference type="HAMAP" id="MF_00434">
    <property type="entry name" value="Pterin_4_alpha"/>
    <property type="match status" value="1"/>
</dbReference>
<dbReference type="InterPro" id="IPR036428">
    <property type="entry name" value="PCD_sf"/>
</dbReference>
<dbReference type="InterPro" id="IPR001533">
    <property type="entry name" value="Pterin_deHydtase"/>
</dbReference>
<dbReference type="NCBIfam" id="NF002018">
    <property type="entry name" value="PRK00823.1-3"/>
    <property type="match status" value="1"/>
</dbReference>
<dbReference type="PANTHER" id="PTHR12599">
    <property type="entry name" value="PTERIN-4-ALPHA-CARBINOLAMINE DEHYDRATASE"/>
    <property type="match status" value="1"/>
</dbReference>
<dbReference type="PANTHER" id="PTHR12599:SF0">
    <property type="entry name" value="PTERIN-4-ALPHA-CARBINOLAMINE DEHYDRATASE"/>
    <property type="match status" value="1"/>
</dbReference>
<dbReference type="Pfam" id="PF01329">
    <property type="entry name" value="Pterin_4a"/>
    <property type="match status" value="1"/>
</dbReference>
<dbReference type="SUPFAM" id="SSF55248">
    <property type="entry name" value="PCD-like"/>
    <property type="match status" value="1"/>
</dbReference>
<evidence type="ECO:0000255" key="1">
    <source>
        <dbReference type="HAMAP-Rule" id="MF_00434"/>
    </source>
</evidence>
<name>PHS_ROSDO</name>
<sequence>MTEKLSTETRGPLLEPLFASGWEMVEGRDAIKKTFVFDNFVDAFGWMTRVAIWAEKWNHHPEWDNVYKTVNVVLTTHDVGGLSTLDAKLARKMDSLAG</sequence>
<feature type="chain" id="PRO_1000050449" description="Putative pterin-4-alpha-carbinolamine dehydratase">
    <location>
        <begin position="1"/>
        <end position="98"/>
    </location>
</feature>
<gene>
    <name type="ordered locus">RD1_0944</name>
</gene>
<reference key="1">
    <citation type="journal article" date="2007" name="J. Bacteriol.">
        <title>The complete genome sequence of Roseobacter denitrificans reveals a mixotrophic rather than photosynthetic metabolism.</title>
        <authorList>
            <person name="Swingley W.D."/>
            <person name="Sadekar S."/>
            <person name="Mastrian S.D."/>
            <person name="Matthies H.J."/>
            <person name="Hao J."/>
            <person name="Ramos H."/>
            <person name="Acharya C.R."/>
            <person name="Conrad A.L."/>
            <person name="Taylor H.L."/>
            <person name="Dejesa L.C."/>
            <person name="Shah M.K."/>
            <person name="O'Huallachain M.E."/>
            <person name="Lince M.T."/>
            <person name="Blankenship R.E."/>
            <person name="Beatty J.T."/>
            <person name="Touchman J.W."/>
        </authorList>
    </citation>
    <scope>NUCLEOTIDE SEQUENCE [LARGE SCALE GENOMIC DNA]</scope>
    <source>
        <strain>ATCC 33942 / OCh 114</strain>
    </source>
</reference>
<comment type="catalytic activity">
    <reaction evidence="1">
        <text>(4aS,6R)-4a-hydroxy-L-erythro-5,6,7,8-tetrahydrobiopterin = (6R)-L-erythro-6,7-dihydrobiopterin + H2O</text>
        <dbReference type="Rhea" id="RHEA:11920"/>
        <dbReference type="ChEBI" id="CHEBI:15377"/>
        <dbReference type="ChEBI" id="CHEBI:15642"/>
        <dbReference type="ChEBI" id="CHEBI:43120"/>
        <dbReference type="EC" id="4.2.1.96"/>
    </reaction>
</comment>
<comment type="similarity">
    <text evidence="1">Belongs to the pterin-4-alpha-carbinolamine dehydratase family.</text>
</comment>
<protein>
    <recommendedName>
        <fullName evidence="1">Putative pterin-4-alpha-carbinolamine dehydratase</fullName>
        <shortName evidence="1">PHS</shortName>
        <ecNumber evidence="1">4.2.1.96</ecNumber>
    </recommendedName>
    <alternativeName>
        <fullName evidence="1">4-alpha-hydroxy-tetrahydropterin dehydratase</fullName>
    </alternativeName>
    <alternativeName>
        <fullName evidence="1">Pterin carbinolamine dehydratase</fullName>
        <shortName evidence="1">PCD</shortName>
    </alternativeName>
</protein>